<reference key="1">
    <citation type="journal article" date="1992" name="J. Bacteriol.">
        <title>Anaerobic growth of Rhodopseudomonas palustris on 4-hydroxybenzoate is dependent on AadR, a member of the cyclic AMP receptor protein family of transcriptional regulators.</title>
        <authorList>
            <person name="Dispensa M."/>
            <person name="Thomas C.T."/>
            <person name="Kim M.-K."/>
            <person name="Perrotta J.A."/>
            <person name="Gibson J."/>
            <person name="Harwood C.S."/>
        </authorList>
    </citation>
    <scope>NUCLEOTIDE SEQUENCE [GENOMIC DNA]</scope>
    <source>
        <strain>ATCC BAA-98 / CGA009</strain>
    </source>
</reference>
<reference key="2">
    <citation type="journal article" date="2004" name="Nat. Biotechnol.">
        <title>Complete genome sequence of the metabolically versatile photosynthetic bacterium Rhodopseudomonas palustris.</title>
        <authorList>
            <person name="Larimer F.W."/>
            <person name="Chain P."/>
            <person name="Hauser L."/>
            <person name="Lamerdin J.E."/>
            <person name="Malfatti S."/>
            <person name="Do L."/>
            <person name="Land M.L."/>
            <person name="Pelletier D.A."/>
            <person name="Beatty J.T."/>
            <person name="Lang A.S."/>
            <person name="Tabita F.R."/>
            <person name="Gibson J.L."/>
            <person name="Hanson T.E."/>
            <person name="Bobst C."/>
            <person name="Torres y Torres J.L."/>
            <person name="Peres C."/>
            <person name="Harrison F.H."/>
            <person name="Gibson J."/>
            <person name="Harwood C.S."/>
        </authorList>
    </citation>
    <scope>NUCLEOTIDE SEQUENCE [LARGE SCALE GENOMIC DNA]</scope>
    <source>
        <strain>ATCC BAA-98 / CGA009</strain>
    </source>
</reference>
<reference key="3">
    <citation type="journal article" date="1999" name="J. Bacteriol.">
        <title>BadR, a new MarR family member, regulates anaerobic benzoate degradation by Rhodopseudomonas palustris in concert with AadR, an Fnr family member.</title>
        <authorList>
            <person name="Egland P.G."/>
            <person name="Harwood C.S."/>
        </authorList>
    </citation>
    <scope>CHARACTERIZATION</scope>
</reference>
<keyword id="KW-0010">Activator</keyword>
<keyword id="KW-0238">DNA-binding</keyword>
<keyword id="KW-0804">Transcription</keyword>
<keyword id="KW-0805">Transcription regulation</keyword>
<gene>
    <name type="primary">aadR</name>
    <name type="ordered locus">RPA4234</name>
</gene>
<feature type="chain" id="PRO_0000100141" description="Transcriptional activatory protein AadR">
    <location>
        <begin position="1"/>
        <end position="239"/>
    </location>
</feature>
<feature type="domain" description="HTH crp-type" evidence="1">
    <location>
        <begin position="158"/>
        <end position="231"/>
    </location>
</feature>
<feature type="DNA-binding region" description="H-T-H motif" evidence="1">
    <location>
        <begin position="191"/>
        <end position="210"/>
    </location>
</feature>
<feature type="binding site">
    <location>
        <begin position="27"/>
        <end position="149"/>
    </location>
    <ligand>
        <name>a nucleoside 3',5'-cyclic phosphate</name>
        <dbReference type="ChEBI" id="CHEBI:58464"/>
    </ligand>
</feature>
<evidence type="ECO:0000255" key="1">
    <source>
        <dbReference type="PROSITE-ProRule" id="PRU00387"/>
    </source>
</evidence>
<comment type="function">
    <text>Transcriptional activator of anaerobic gene expression. For aromatic acid degradation. Also required for the anaerobic degradation of benzoate.</text>
</comment>
<comment type="miscellaneous">
    <text>Possesses 4 cysteines which may bind a metal ion (possibly iron).</text>
</comment>
<proteinExistence type="evidence at protein level"/>
<accession>Q01980</accession>
<organism>
    <name type="scientific">Rhodopseudomonas palustris (strain ATCC BAA-98 / CGA009)</name>
    <dbReference type="NCBI Taxonomy" id="258594"/>
    <lineage>
        <taxon>Bacteria</taxon>
        <taxon>Pseudomonadati</taxon>
        <taxon>Pseudomonadota</taxon>
        <taxon>Alphaproteobacteria</taxon>
        <taxon>Hyphomicrobiales</taxon>
        <taxon>Nitrobacteraceae</taxon>
        <taxon>Rhodopseudomonas</taxon>
    </lineage>
</organism>
<dbReference type="EMBL" id="M92426">
    <property type="protein sequence ID" value="AAA26090.1"/>
    <property type="molecule type" value="Genomic_DNA"/>
</dbReference>
<dbReference type="EMBL" id="BX572606">
    <property type="protein sequence ID" value="CAE29675.1"/>
    <property type="molecule type" value="Genomic_DNA"/>
</dbReference>
<dbReference type="PIR" id="B43334">
    <property type="entry name" value="B43334"/>
</dbReference>
<dbReference type="RefSeq" id="WP_011159769.1">
    <property type="nucleotide sequence ID" value="NZ_CP116810.1"/>
</dbReference>
<dbReference type="SMR" id="Q01980"/>
<dbReference type="STRING" id="258594.RPA4234"/>
<dbReference type="GeneID" id="66895360"/>
<dbReference type="eggNOG" id="COG0664">
    <property type="taxonomic scope" value="Bacteria"/>
</dbReference>
<dbReference type="HOGENOM" id="CLU_075053_0_1_5"/>
<dbReference type="PhylomeDB" id="Q01980"/>
<dbReference type="GO" id="GO:0005829">
    <property type="term" value="C:cytosol"/>
    <property type="evidence" value="ECO:0007669"/>
    <property type="project" value="TreeGrafter"/>
</dbReference>
<dbReference type="GO" id="GO:0003677">
    <property type="term" value="F:DNA binding"/>
    <property type="evidence" value="ECO:0007669"/>
    <property type="project" value="UniProtKB-KW"/>
</dbReference>
<dbReference type="GO" id="GO:0003700">
    <property type="term" value="F:DNA-binding transcription factor activity"/>
    <property type="evidence" value="ECO:0007669"/>
    <property type="project" value="InterPro"/>
</dbReference>
<dbReference type="CDD" id="cd00038">
    <property type="entry name" value="CAP_ED"/>
    <property type="match status" value="1"/>
</dbReference>
<dbReference type="CDD" id="cd00092">
    <property type="entry name" value="HTH_CRP"/>
    <property type="match status" value="1"/>
</dbReference>
<dbReference type="Gene3D" id="2.60.120.10">
    <property type="entry name" value="Jelly Rolls"/>
    <property type="match status" value="1"/>
</dbReference>
<dbReference type="Gene3D" id="1.10.10.10">
    <property type="entry name" value="Winged helix-like DNA-binding domain superfamily/Winged helix DNA-binding domain"/>
    <property type="match status" value="1"/>
</dbReference>
<dbReference type="InterPro" id="IPR000595">
    <property type="entry name" value="cNMP-bd_dom"/>
</dbReference>
<dbReference type="InterPro" id="IPR018490">
    <property type="entry name" value="cNMP-bd_dom_sf"/>
</dbReference>
<dbReference type="InterPro" id="IPR050397">
    <property type="entry name" value="Env_Response_Regulators"/>
</dbReference>
<dbReference type="InterPro" id="IPR012318">
    <property type="entry name" value="HTH_CRP"/>
</dbReference>
<dbReference type="InterPro" id="IPR014710">
    <property type="entry name" value="RmlC-like_jellyroll"/>
</dbReference>
<dbReference type="InterPro" id="IPR018335">
    <property type="entry name" value="Tscrpt_reg_HTH_Crp-type_CS"/>
</dbReference>
<dbReference type="InterPro" id="IPR036388">
    <property type="entry name" value="WH-like_DNA-bd_sf"/>
</dbReference>
<dbReference type="InterPro" id="IPR036390">
    <property type="entry name" value="WH_DNA-bd_sf"/>
</dbReference>
<dbReference type="PANTHER" id="PTHR24567">
    <property type="entry name" value="CRP FAMILY TRANSCRIPTIONAL REGULATORY PROTEIN"/>
    <property type="match status" value="1"/>
</dbReference>
<dbReference type="PANTHER" id="PTHR24567:SF75">
    <property type="entry name" value="FUMARATE AND NITRATE REDUCTION REGULATORY PROTEIN"/>
    <property type="match status" value="1"/>
</dbReference>
<dbReference type="Pfam" id="PF00027">
    <property type="entry name" value="cNMP_binding"/>
    <property type="match status" value="1"/>
</dbReference>
<dbReference type="Pfam" id="PF00325">
    <property type="entry name" value="Crp"/>
    <property type="match status" value="1"/>
</dbReference>
<dbReference type="PRINTS" id="PR00034">
    <property type="entry name" value="HTHCRP"/>
</dbReference>
<dbReference type="SMART" id="SM00100">
    <property type="entry name" value="cNMP"/>
    <property type="match status" value="1"/>
</dbReference>
<dbReference type="SMART" id="SM00419">
    <property type="entry name" value="HTH_CRP"/>
    <property type="match status" value="1"/>
</dbReference>
<dbReference type="SUPFAM" id="SSF51206">
    <property type="entry name" value="cAMP-binding domain-like"/>
    <property type="match status" value="1"/>
</dbReference>
<dbReference type="SUPFAM" id="SSF46785">
    <property type="entry name" value="Winged helix' DNA-binding domain"/>
    <property type="match status" value="1"/>
</dbReference>
<dbReference type="PROSITE" id="PS50042">
    <property type="entry name" value="CNMP_BINDING_3"/>
    <property type="match status" value="1"/>
</dbReference>
<dbReference type="PROSITE" id="PS00042">
    <property type="entry name" value="HTH_CRP_1"/>
    <property type="match status" value="1"/>
</dbReference>
<dbReference type="PROSITE" id="PS51063">
    <property type="entry name" value="HTH_CRP_2"/>
    <property type="match status" value="1"/>
</dbReference>
<sequence>MPHLAYPTTTCEGFRCETHCAVRGLAICGELGPADHEEFERLAQHVRYGPKEALFSEDEVADSVYSLIEGIARLYKLLPDGRRQIIGFALPGDFLGMAPGNRYSFSADSIGGVTVCKFFRGPFLRFIENRPQMLLRMNDFATRELSLAQDQMLLLGRRSAEEKVAAFLVGWRDRLARLEGVTKTVSLPMGRQDIADFLGLTIETVSRTFTKLEREKLIVIVPDGVRVLDPKRFDALAAA</sequence>
<name>AADR_RHOPA</name>
<protein>
    <recommendedName>
        <fullName>Transcriptional activatory protein AadR</fullName>
    </recommendedName>
    <alternativeName>
        <fullName>Anaerobic aromatic degradation regulator</fullName>
    </alternativeName>
</protein>